<keyword id="KW-0378">Hydrolase</keyword>
<keyword id="KW-1185">Reference proteome</keyword>
<comment type="function">
    <text evidence="1">Hydrolyzes diadenosine 5',5'''-P1,P4-tetraphosphate to yield ADP.</text>
</comment>
<comment type="catalytic activity">
    <reaction evidence="1">
        <text>P(1),P(4)-bis(5'-adenosyl) tetraphosphate + H2O = 2 ADP + 2 H(+)</text>
        <dbReference type="Rhea" id="RHEA:24252"/>
        <dbReference type="ChEBI" id="CHEBI:15377"/>
        <dbReference type="ChEBI" id="CHEBI:15378"/>
        <dbReference type="ChEBI" id="CHEBI:58141"/>
        <dbReference type="ChEBI" id="CHEBI:456216"/>
        <dbReference type="EC" id="3.6.1.41"/>
    </reaction>
</comment>
<comment type="similarity">
    <text evidence="1">Belongs to the Ap4A hydrolase family.</text>
</comment>
<evidence type="ECO:0000255" key="1">
    <source>
        <dbReference type="HAMAP-Rule" id="MF_00199"/>
    </source>
</evidence>
<name>APAH_ECO45</name>
<proteinExistence type="inferred from homology"/>
<dbReference type="EC" id="3.6.1.41" evidence="1"/>
<dbReference type="EMBL" id="CU928161">
    <property type="protein sequence ID" value="CAR01420.1"/>
    <property type="molecule type" value="Genomic_DNA"/>
</dbReference>
<dbReference type="RefSeq" id="WP_000257201.1">
    <property type="nucleotide sequence ID" value="NC_011742.1"/>
</dbReference>
<dbReference type="SMR" id="B7MAH4"/>
<dbReference type="KEGG" id="ecz:ECS88_0054"/>
<dbReference type="HOGENOM" id="CLU_056184_2_0_6"/>
<dbReference type="Proteomes" id="UP000000747">
    <property type="component" value="Chromosome"/>
</dbReference>
<dbReference type="GO" id="GO:0008803">
    <property type="term" value="F:bis(5'-nucleosyl)-tetraphosphatase (symmetrical) activity"/>
    <property type="evidence" value="ECO:0007669"/>
    <property type="project" value="UniProtKB-UniRule"/>
</dbReference>
<dbReference type="CDD" id="cd07422">
    <property type="entry name" value="MPP_ApaH"/>
    <property type="match status" value="1"/>
</dbReference>
<dbReference type="FunFam" id="3.60.21.10:FF:000013">
    <property type="entry name" value="Bis(5'-nucleosyl)-tetraphosphatase, symmetrical"/>
    <property type="match status" value="1"/>
</dbReference>
<dbReference type="Gene3D" id="3.60.21.10">
    <property type="match status" value="1"/>
</dbReference>
<dbReference type="HAMAP" id="MF_00199">
    <property type="entry name" value="ApaH"/>
    <property type="match status" value="1"/>
</dbReference>
<dbReference type="InterPro" id="IPR004617">
    <property type="entry name" value="ApaH"/>
</dbReference>
<dbReference type="InterPro" id="IPR004843">
    <property type="entry name" value="Calcineurin-like_PHP_ApaH"/>
</dbReference>
<dbReference type="InterPro" id="IPR029052">
    <property type="entry name" value="Metallo-depent_PP-like"/>
</dbReference>
<dbReference type="NCBIfam" id="TIGR00668">
    <property type="entry name" value="apaH"/>
    <property type="match status" value="1"/>
</dbReference>
<dbReference type="NCBIfam" id="NF001204">
    <property type="entry name" value="PRK00166.1"/>
    <property type="match status" value="1"/>
</dbReference>
<dbReference type="PANTHER" id="PTHR40942">
    <property type="match status" value="1"/>
</dbReference>
<dbReference type="PANTHER" id="PTHR40942:SF4">
    <property type="entry name" value="CYTOCHROME C5"/>
    <property type="match status" value="1"/>
</dbReference>
<dbReference type="Pfam" id="PF00149">
    <property type="entry name" value="Metallophos"/>
    <property type="match status" value="1"/>
</dbReference>
<dbReference type="PIRSF" id="PIRSF000903">
    <property type="entry name" value="B5n-ttraPtase_sm"/>
    <property type="match status" value="1"/>
</dbReference>
<dbReference type="SUPFAM" id="SSF56300">
    <property type="entry name" value="Metallo-dependent phosphatases"/>
    <property type="match status" value="1"/>
</dbReference>
<accession>B7MAH4</accession>
<gene>
    <name evidence="1" type="primary">apaH</name>
    <name type="ordered locus">ECS88_0054</name>
</gene>
<sequence length="282" mass="31567">MATYLIGDVHGCYDELIALLHKVEFTPGKDTLWLTGDLVARGPGSLDVLRYVKSLGDSVRLVLGNHDLHLLAVFAGISRNKPKDRLTPLLEAPDADELLNWLRRQPLLQIDKEKKLVMAHAGITPQWDLQTAKECARDVEAVLSSDSYPFFLDAMYGDMPNNWSPELRGLGRLRFITNAFTRMRFCFPNGQLDMYSKESPEEAPAPLKPWFAIPGPVAEEYNIAFGHWASLEGKGTPEGIYALDTGCCWGGTLTCLRWEDKQYFVQPSNRHKDLSEGEAVAS</sequence>
<protein>
    <recommendedName>
        <fullName evidence="1">Bis(5'-nucleosyl)-tetraphosphatase, symmetrical</fullName>
        <ecNumber evidence="1">3.6.1.41</ecNumber>
    </recommendedName>
    <alternativeName>
        <fullName evidence="1">Ap4A hydrolase</fullName>
    </alternativeName>
    <alternativeName>
        <fullName evidence="1">Diadenosine 5',5'''-P1,P4-tetraphosphate pyrophosphohydrolase</fullName>
    </alternativeName>
    <alternativeName>
        <fullName evidence="1">Diadenosine tetraphosphatase</fullName>
    </alternativeName>
</protein>
<feature type="chain" id="PRO_1000118692" description="Bis(5'-nucleosyl)-tetraphosphatase, symmetrical">
    <location>
        <begin position="1"/>
        <end position="282"/>
    </location>
</feature>
<organism>
    <name type="scientific">Escherichia coli O45:K1 (strain S88 / ExPEC)</name>
    <dbReference type="NCBI Taxonomy" id="585035"/>
    <lineage>
        <taxon>Bacteria</taxon>
        <taxon>Pseudomonadati</taxon>
        <taxon>Pseudomonadota</taxon>
        <taxon>Gammaproteobacteria</taxon>
        <taxon>Enterobacterales</taxon>
        <taxon>Enterobacteriaceae</taxon>
        <taxon>Escherichia</taxon>
    </lineage>
</organism>
<reference key="1">
    <citation type="journal article" date="2009" name="PLoS Genet.">
        <title>Organised genome dynamics in the Escherichia coli species results in highly diverse adaptive paths.</title>
        <authorList>
            <person name="Touchon M."/>
            <person name="Hoede C."/>
            <person name="Tenaillon O."/>
            <person name="Barbe V."/>
            <person name="Baeriswyl S."/>
            <person name="Bidet P."/>
            <person name="Bingen E."/>
            <person name="Bonacorsi S."/>
            <person name="Bouchier C."/>
            <person name="Bouvet O."/>
            <person name="Calteau A."/>
            <person name="Chiapello H."/>
            <person name="Clermont O."/>
            <person name="Cruveiller S."/>
            <person name="Danchin A."/>
            <person name="Diard M."/>
            <person name="Dossat C."/>
            <person name="Karoui M.E."/>
            <person name="Frapy E."/>
            <person name="Garry L."/>
            <person name="Ghigo J.M."/>
            <person name="Gilles A.M."/>
            <person name="Johnson J."/>
            <person name="Le Bouguenec C."/>
            <person name="Lescat M."/>
            <person name="Mangenot S."/>
            <person name="Martinez-Jehanne V."/>
            <person name="Matic I."/>
            <person name="Nassif X."/>
            <person name="Oztas S."/>
            <person name="Petit M.A."/>
            <person name="Pichon C."/>
            <person name="Rouy Z."/>
            <person name="Ruf C.S."/>
            <person name="Schneider D."/>
            <person name="Tourret J."/>
            <person name="Vacherie B."/>
            <person name="Vallenet D."/>
            <person name="Medigue C."/>
            <person name="Rocha E.P.C."/>
            <person name="Denamur E."/>
        </authorList>
    </citation>
    <scope>NUCLEOTIDE SEQUENCE [LARGE SCALE GENOMIC DNA]</scope>
    <source>
        <strain>S88 / ExPEC</strain>
    </source>
</reference>